<name>CTCF_RAT</name>
<dbReference type="EMBL" id="AF133731">
    <property type="protein sequence ID" value="AAD27869.2"/>
    <property type="molecule type" value="mRNA"/>
</dbReference>
<dbReference type="RefSeq" id="NP_114012.1">
    <property type="nucleotide sequence ID" value="NM_031824.1"/>
</dbReference>
<dbReference type="SMR" id="Q9R1D1"/>
<dbReference type="FunCoup" id="Q9R1D1">
    <property type="interactions" value="3593"/>
</dbReference>
<dbReference type="STRING" id="10116.ENSRNOP00000023851"/>
<dbReference type="iPTMnet" id="Q9R1D1"/>
<dbReference type="PhosphoSitePlus" id="Q9R1D1"/>
<dbReference type="PaxDb" id="10116-ENSRNOP00000023851"/>
<dbReference type="GeneID" id="83726"/>
<dbReference type="KEGG" id="rno:83726"/>
<dbReference type="UCSC" id="RGD:621344">
    <property type="organism name" value="rat"/>
</dbReference>
<dbReference type="AGR" id="RGD:621344"/>
<dbReference type="CTD" id="10664"/>
<dbReference type="RGD" id="621344">
    <property type="gene designation" value="Ctcf"/>
</dbReference>
<dbReference type="eggNOG" id="KOG1721">
    <property type="taxonomic scope" value="Eukaryota"/>
</dbReference>
<dbReference type="HOGENOM" id="CLU_002678_77_1_1"/>
<dbReference type="InParanoid" id="Q9R1D1"/>
<dbReference type="PhylomeDB" id="Q9R1D1"/>
<dbReference type="PRO" id="PR:Q9R1D1"/>
<dbReference type="Proteomes" id="UP000002494">
    <property type="component" value="Unplaced"/>
</dbReference>
<dbReference type="GO" id="GO:0000775">
    <property type="term" value="C:chromosome, centromeric region"/>
    <property type="evidence" value="ECO:0000250"/>
    <property type="project" value="UniProtKB"/>
</dbReference>
<dbReference type="GO" id="GO:0000793">
    <property type="term" value="C:condensed chromosome"/>
    <property type="evidence" value="ECO:0000266"/>
    <property type="project" value="RGD"/>
</dbReference>
<dbReference type="GO" id="GO:0001651">
    <property type="term" value="C:dense fibrillar component"/>
    <property type="evidence" value="ECO:0000314"/>
    <property type="project" value="RGD"/>
</dbReference>
<dbReference type="GO" id="GO:0001652">
    <property type="term" value="C:granular component"/>
    <property type="evidence" value="ECO:0000314"/>
    <property type="project" value="RGD"/>
</dbReference>
<dbReference type="GO" id="GO:0001673">
    <property type="term" value="C:male germ cell nucleus"/>
    <property type="evidence" value="ECO:0000266"/>
    <property type="project" value="RGD"/>
</dbReference>
<dbReference type="GO" id="GO:0005730">
    <property type="term" value="C:nucleolus"/>
    <property type="evidence" value="ECO:0000266"/>
    <property type="project" value="RGD"/>
</dbReference>
<dbReference type="GO" id="GO:0005654">
    <property type="term" value="C:nucleoplasm"/>
    <property type="evidence" value="ECO:0000266"/>
    <property type="project" value="RGD"/>
</dbReference>
<dbReference type="GO" id="GO:0005634">
    <property type="term" value="C:nucleus"/>
    <property type="evidence" value="ECO:0000250"/>
    <property type="project" value="UniProtKB"/>
</dbReference>
<dbReference type="GO" id="GO:0003682">
    <property type="term" value="F:chromatin binding"/>
    <property type="evidence" value="ECO:0000266"/>
    <property type="project" value="RGD"/>
</dbReference>
<dbReference type="GO" id="GO:0043035">
    <property type="term" value="F:chromatin insulator sequence binding"/>
    <property type="evidence" value="ECO:0000266"/>
    <property type="project" value="RGD"/>
</dbReference>
<dbReference type="GO" id="GO:0140587">
    <property type="term" value="F:chromatin loop anchoring activity"/>
    <property type="evidence" value="ECO:0000266"/>
    <property type="project" value="RGD"/>
</dbReference>
<dbReference type="GO" id="GO:0000987">
    <property type="term" value="F:cis-regulatory region sequence-specific DNA binding"/>
    <property type="evidence" value="ECO:0000266"/>
    <property type="project" value="RGD"/>
</dbReference>
<dbReference type="GO" id="GO:0003677">
    <property type="term" value="F:DNA binding"/>
    <property type="evidence" value="ECO:0000266"/>
    <property type="project" value="RGD"/>
</dbReference>
<dbReference type="GO" id="GO:0003700">
    <property type="term" value="F:DNA-binding transcription factor activity"/>
    <property type="evidence" value="ECO:0000266"/>
    <property type="project" value="RGD"/>
</dbReference>
<dbReference type="GO" id="GO:0140297">
    <property type="term" value="F:DNA-binding transcription factor binding"/>
    <property type="evidence" value="ECO:0000314"/>
    <property type="project" value="RGD"/>
</dbReference>
<dbReference type="GO" id="GO:0001227">
    <property type="term" value="F:DNA-binding transcription repressor activity, RNA polymerase II-specific"/>
    <property type="evidence" value="ECO:0000266"/>
    <property type="project" value="RGD"/>
</dbReference>
<dbReference type="GO" id="GO:0000978">
    <property type="term" value="F:RNA polymerase II cis-regulatory region sequence-specific DNA binding"/>
    <property type="evidence" value="ECO:0000266"/>
    <property type="project" value="RGD"/>
</dbReference>
<dbReference type="GO" id="GO:0043565">
    <property type="term" value="F:sequence-specific DNA binding"/>
    <property type="evidence" value="ECO:0000266"/>
    <property type="project" value="RGD"/>
</dbReference>
<dbReference type="GO" id="GO:1990837">
    <property type="term" value="F:sequence-specific double-stranded DNA binding"/>
    <property type="evidence" value="ECO:0000266"/>
    <property type="project" value="RGD"/>
</dbReference>
<dbReference type="GO" id="GO:0000976">
    <property type="term" value="F:transcription cis-regulatory region binding"/>
    <property type="evidence" value="ECO:0000266"/>
    <property type="project" value="RGD"/>
</dbReference>
<dbReference type="GO" id="GO:0001221">
    <property type="term" value="F:transcription coregulator binding"/>
    <property type="evidence" value="ECO:0000266"/>
    <property type="project" value="RGD"/>
</dbReference>
<dbReference type="GO" id="GO:0008270">
    <property type="term" value="F:zinc ion binding"/>
    <property type="evidence" value="ECO:0007669"/>
    <property type="project" value="UniProtKB-KW"/>
</dbReference>
<dbReference type="GO" id="GO:0055013">
    <property type="term" value="P:cardiac muscle cell development"/>
    <property type="evidence" value="ECO:0000266"/>
    <property type="project" value="RGD"/>
</dbReference>
<dbReference type="GO" id="GO:0055007">
    <property type="term" value="P:cardiac muscle cell differentiation"/>
    <property type="evidence" value="ECO:0000266"/>
    <property type="project" value="RGD"/>
</dbReference>
<dbReference type="GO" id="GO:0140588">
    <property type="term" value="P:chromatin looping"/>
    <property type="evidence" value="ECO:0000266"/>
    <property type="project" value="RGD"/>
</dbReference>
<dbReference type="GO" id="GO:0006325">
    <property type="term" value="P:chromatin organization"/>
    <property type="evidence" value="ECO:0000266"/>
    <property type="project" value="RGD"/>
</dbReference>
<dbReference type="GO" id="GO:0007059">
    <property type="term" value="P:chromosome segregation"/>
    <property type="evidence" value="ECO:0007669"/>
    <property type="project" value="UniProtKB-KW"/>
</dbReference>
<dbReference type="GO" id="GO:0006346">
    <property type="term" value="P:DNA methylation-dependent constitutive heterochromatin formation"/>
    <property type="evidence" value="ECO:0000266"/>
    <property type="project" value="RGD"/>
</dbReference>
<dbReference type="GO" id="GO:0040029">
    <property type="term" value="P:epigenetic regulation of gene expression"/>
    <property type="evidence" value="ECO:0000266"/>
    <property type="project" value="RGD"/>
</dbReference>
<dbReference type="GO" id="GO:0010467">
    <property type="term" value="P:gene expression"/>
    <property type="evidence" value="ECO:0000266"/>
    <property type="project" value="RGD"/>
</dbReference>
<dbReference type="GO" id="GO:0071514">
    <property type="term" value="P:genomic imprinting"/>
    <property type="evidence" value="ECO:0000266"/>
    <property type="project" value="RGD"/>
</dbReference>
<dbReference type="GO" id="GO:0007507">
    <property type="term" value="P:heart development"/>
    <property type="evidence" value="ECO:0000266"/>
    <property type="project" value="RGD"/>
</dbReference>
<dbReference type="GO" id="GO:0001701">
    <property type="term" value="P:in utero embryonic development"/>
    <property type="evidence" value="ECO:0000266"/>
    <property type="project" value="RGD"/>
</dbReference>
<dbReference type="GO" id="GO:0007005">
    <property type="term" value="P:mitochondrion organization"/>
    <property type="evidence" value="ECO:0000266"/>
    <property type="project" value="RGD"/>
</dbReference>
<dbReference type="GO" id="GO:0008285">
    <property type="term" value="P:negative regulation of cell population proliferation"/>
    <property type="evidence" value="ECO:0000250"/>
    <property type="project" value="UniProtKB"/>
</dbReference>
<dbReference type="GO" id="GO:0045892">
    <property type="term" value="P:negative regulation of DNA-templated transcription"/>
    <property type="evidence" value="ECO:0000266"/>
    <property type="project" value="RGD"/>
</dbReference>
<dbReference type="GO" id="GO:0010629">
    <property type="term" value="P:negative regulation of gene expression"/>
    <property type="evidence" value="ECO:0000266"/>
    <property type="project" value="RGD"/>
</dbReference>
<dbReference type="GO" id="GO:0044027">
    <property type="term" value="P:negative regulation of gene expression via chromosomal CpG island methylation"/>
    <property type="evidence" value="ECO:0000266"/>
    <property type="project" value="RGD"/>
</dbReference>
<dbReference type="GO" id="GO:0000122">
    <property type="term" value="P:negative regulation of transcription by RNA polymerase II"/>
    <property type="evidence" value="ECO:0000266"/>
    <property type="project" value="RGD"/>
</dbReference>
<dbReference type="GO" id="GO:0045893">
    <property type="term" value="P:positive regulation of DNA-templated transcription"/>
    <property type="evidence" value="ECO:0000266"/>
    <property type="project" value="RGD"/>
</dbReference>
<dbReference type="GO" id="GO:0010628">
    <property type="term" value="P:positive regulation of gene expression"/>
    <property type="evidence" value="ECO:0000266"/>
    <property type="project" value="RGD"/>
</dbReference>
<dbReference type="GO" id="GO:1902895">
    <property type="term" value="P:positive regulation of miRNA transcription"/>
    <property type="evidence" value="ECO:0000315"/>
    <property type="project" value="BHF-UCL"/>
</dbReference>
<dbReference type="GO" id="GO:0045944">
    <property type="term" value="P:positive regulation of transcription by RNA polymerase II"/>
    <property type="evidence" value="ECO:0000266"/>
    <property type="project" value="RGD"/>
</dbReference>
<dbReference type="GO" id="GO:0071459">
    <property type="term" value="P:protein localization to chromosome, centromeric region"/>
    <property type="evidence" value="ECO:0000250"/>
    <property type="project" value="UniProtKB"/>
</dbReference>
<dbReference type="GO" id="GO:0006355">
    <property type="term" value="P:regulation of DNA-templated transcription"/>
    <property type="evidence" value="ECO:0000266"/>
    <property type="project" value="RGD"/>
</dbReference>
<dbReference type="GO" id="GO:0006357">
    <property type="term" value="P:regulation of transcription by RNA polymerase II"/>
    <property type="evidence" value="ECO:0000318"/>
    <property type="project" value="GO_Central"/>
</dbReference>
<dbReference type="FunFam" id="3.30.160.60:FF:000222">
    <property type="entry name" value="Putative transcriptional repressor ctcf"/>
    <property type="match status" value="1"/>
</dbReference>
<dbReference type="FunFam" id="3.30.160.60:FF:000283">
    <property type="entry name" value="Putative transcriptional repressor ctcf"/>
    <property type="match status" value="1"/>
</dbReference>
<dbReference type="FunFam" id="3.30.160.60:FF:000373">
    <property type="entry name" value="Putative transcriptional repressor ctcf"/>
    <property type="match status" value="1"/>
</dbReference>
<dbReference type="FunFam" id="3.30.160.60:FF:000420">
    <property type="entry name" value="Putative transcriptional repressor ctcf"/>
    <property type="match status" value="1"/>
</dbReference>
<dbReference type="FunFam" id="3.30.160.60:FF:000851">
    <property type="entry name" value="Putative transcriptional repressor ctcf"/>
    <property type="match status" value="1"/>
</dbReference>
<dbReference type="FunFam" id="3.30.160.60:FF:000049">
    <property type="entry name" value="transcriptional repressor CTCF isoform X1"/>
    <property type="match status" value="2"/>
</dbReference>
<dbReference type="FunFam" id="3.30.160.60:FF:000123">
    <property type="entry name" value="transcriptional repressor CTCF isoform X1"/>
    <property type="match status" value="1"/>
</dbReference>
<dbReference type="Gene3D" id="3.30.160.60">
    <property type="entry name" value="Classic Zinc Finger"/>
    <property type="match status" value="8"/>
</dbReference>
<dbReference type="InterPro" id="IPR050331">
    <property type="entry name" value="Zinc_finger"/>
</dbReference>
<dbReference type="InterPro" id="IPR056438">
    <property type="entry name" value="Znf-C2H2_CTCF"/>
</dbReference>
<dbReference type="InterPro" id="IPR036236">
    <property type="entry name" value="Znf_C2H2_sf"/>
</dbReference>
<dbReference type="InterPro" id="IPR013087">
    <property type="entry name" value="Znf_C2H2_type"/>
</dbReference>
<dbReference type="PANTHER" id="PTHR16515:SF49">
    <property type="entry name" value="GASTRULA ZINC FINGER PROTEIN XLCGF49.1-LIKE-RELATED"/>
    <property type="match status" value="1"/>
</dbReference>
<dbReference type="PANTHER" id="PTHR16515">
    <property type="entry name" value="PR DOMAIN ZINC FINGER PROTEIN"/>
    <property type="match status" value="1"/>
</dbReference>
<dbReference type="Pfam" id="PF00096">
    <property type="entry name" value="zf-C2H2"/>
    <property type="match status" value="6"/>
</dbReference>
<dbReference type="Pfam" id="PF23611">
    <property type="entry name" value="zf-C2H2_16"/>
    <property type="match status" value="1"/>
</dbReference>
<dbReference type="SMART" id="SM00355">
    <property type="entry name" value="ZnF_C2H2"/>
    <property type="match status" value="11"/>
</dbReference>
<dbReference type="SUPFAM" id="SSF57667">
    <property type="entry name" value="beta-beta-alpha zinc fingers"/>
    <property type="match status" value="7"/>
</dbReference>
<dbReference type="PROSITE" id="PS00028">
    <property type="entry name" value="ZINC_FINGER_C2H2_1"/>
    <property type="match status" value="8"/>
</dbReference>
<dbReference type="PROSITE" id="PS50157">
    <property type="entry name" value="ZINC_FINGER_C2H2_2"/>
    <property type="match status" value="11"/>
</dbReference>
<feature type="chain" id="PRO_0000047230" description="Transcriptional repressor CTCF">
    <location>
        <begin position="1"/>
        <end position="737"/>
    </location>
</feature>
<feature type="zinc finger region" description="C2H2-type 1" evidence="4">
    <location>
        <begin position="266"/>
        <end position="288"/>
    </location>
</feature>
<feature type="zinc finger region" description="C2H2-type 2" evidence="4">
    <location>
        <begin position="294"/>
        <end position="316"/>
    </location>
</feature>
<feature type="zinc finger region" description="C2H2-type 3" evidence="4">
    <location>
        <begin position="322"/>
        <end position="345"/>
    </location>
</feature>
<feature type="zinc finger region" description="C2H2-type 4" evidence="4">
    <location>
        <begin position="351"/>
        <end position="373"/>
    </location>
</feature>
<feature type="zinc finger region" description="C2H2-type 5" evidence="4">
    <location>
        <begin position="379"/>
        <end position="401"/>
    </location>
</feature>
<feature type="zinc finger region" description="C2H2-type 6" evidence="4">
    <location>
        <begin position="407"/>
        <end position="430"/>
    </location>
</feature>
<feature type="zinc finger region" description="C2H2-type 7" evidence="4">
    <location>
        <begin position="437"/>
        <end position="460"/>
    </location>
</feature>
<feature type="zinc finger region" description="C2H2-type 8" evidence="4">
    <location>
        <begin position="467"/>
        <end position="489"/>
    </location>
</feature>
<feature type="zinc finger region" description="C2H2-type 9" evidence="4">
    <location>
        <begin position="495"/>
        <end position="517"/>
    </location>
</feature>
<feature type="zinc finger region" description="C2H2-type 10" evidence="4">
    <location>
        <begin position="523"/>
        <end position="546"/>
    </location>
</feature>
<feature type="zinc finger region" description="C2H2-type 11; atypical" evidence="4">
    <location>
        <begin position="555"/>
        <end position="577"/>
    </location>
</feature>
<feature type="region of interest" description="Disordered" evidence="5">
    <location>
        <begin position="180"/>
        <end position="211"/>
    </location>
</feature>
<feature type="region of interest" description="Disordered" evidence="5">
    <location>
        <begin position="573"/>
        <end position="687"/>
    </location>
</feature>
<feature type="region of interest" description="Disordered" evidence="5">
    <location>
        <begin position="699"/>
        <end position="727"/>
    </location>
</feature>
<feature type="compositionally biased region" description="Basic residues" evidence="5">
    <location>
        <begin position="202"/>
        <end position="211"/>
    </location>
</feature>
<feature type="compositionally biased region" description="Basic residues" evidence="5">
    <location>
        <begin position="593"/>
        <end position="604"/>
    </location>
</feature>
<feature type="compositionally biased region" description="Acidic residues" evidence="5">
    <location>
        <begin position="610"/>
        <end position="636"/>
    </location>
</feature>
<feature type="compositionally biased region" description="Pro residues" evidence="5">
    <location>
        <begin position="637"/>
        <end position="657"/>
    </location>
</feature>
<feature type="compositionally biased region" description="Polar residues" evidence="5">
    <location>
        <begin position="668"/>
        <end position="687"/>
    </location>
</feature>
<feature type="compositionally biased region" description="Acidic residues" evidence="5">
    <location>
        <begin position="704"/>
        <end position="714"/>
    </location>
</feature>
<feature type="modified residue" description="N-acetylmethionine" evidence="2">
    <location>
        <position position="1"/>
    </location>
</feature>
<feature type="modified residue" description="Phosphothreonine" evidence="2">
    <location>
        <position position="289"/>
    </location>
</feature>
<feature type="modified residue" description="Phosphothreonine" evidence="2">
    <location>
        <position position="317"/>
    </location>
</feature>
<feature type="modified residue" description="Phosphothreonine" evidence="2">
    <location>
        <position position="374"/>
    </location>
</feature>
<feature type="modified residue" description="Phosphoserine" evidence="2">
    <location>
        <position position="402"/>
    </location>
</feature>
<feature type="modified residue" description="Phosphoserine" evidence="2">
    <location>
        <position position="609"/>
    </location>
</feature>
<feature type="modified residue" description="Phosphoserine" evidence="2">
    <location>
        <position position="610"/>
    </location>
</feature>
<feature type="modified residue" description="Phosphoserine" evidence="2">
    <location>
        <position position="612"/>
    </location>
</feature>
<feature type="cross-link" description="Glycyl lysine isopeptide (Lys-Gly) (interchain with G-Cter in SUMO2)" evidence="2">
    <location>
        <position position="18"/>
    </location>
</feature>
<feature type="cross-link" description="Glycyl lysine isopeptide (Lys-Gly) (interchain with G-Cter in SUMO)" evidence="1">
    <location>
        <position position="74"/>
    </location>
</feature>
<feature type="cross-link" description="Glycyl lysine isopeptide (Lys-Gly) (interchain with G-Cter in SUMO2)" evidence="2">
    <location>
        <position position="219"/>
    </location>
</feature>
<feature type="cross-link" description="Glycyl lysine isopeptide (Lys-Gly) (interchain with G-Cter in SUMO); alternate" evidence="1">
    <location>
        <position position="699"/>
    </location>
</feature>
<feature type="cross-link" description="Glycyl lysine isopeptide (Lys-Gly) (interchain with G-Cter in SUMO2); alternate" evidence="2">
    <location>
        <position position="699"/>
    </location>
</feature>
<protein>
    <recommendedName>
        <fullName>Transcriptional repressor CTCF</fullName>
    </recommendedName>
    <alternativeName>
        <fullName>11-zinc finger protein</fullName>
    </alternativeName>
    <alternativeName>
        <fullName>CCCTC-binding factor</fullName>
    </alternativeName>
    <alternativeName>
        <fullName>CTCFL paralog</fullName>
    </alternativeName>
</protein>
<comment type="function">
    <text evidence="2 3">Chromatin binding factor that binds to DNA sequence specific sites and regulates the 3D structure of chromatin. Binds together strands of DNA, thus forming chromatin loops, and anchors DNA to cellular structures, such as the nuclear lamina. Defines the boundaries between active and heterochromatic DNA via binding to chromatin insulators, thereby preventing interaction between promoter and nearby enhancers and silencers. Plays a critical role in the epigenetic regulation. Participates in the allele-specific gene expression at the imprinted IGF2/H19 gene locus (By similarity). On the maternal allele, binding within the H19 imprinting control region (ICR) mediates maternally inherited higher-order chromatin conformation to restrict enhancer access to IGF2. Mediates interchromosomal association between IGF2/H19 and WSB1/NF1 and may direct distant DNA segments to a common transcription factory. Regulates asynchronous replication of IGF2/H19. Plays a critical role in gene silencing over considerable distances in the genome (By similarity). Preferentially interacts with unmethylated DNA, preventing spreading of CpG methylation and maintaining methylation-free zones. Inversely, binding to target sites is prevented by CpG methylation. Plays an important role in chromatin remodeling. Can dimerize when it is bound to different DNA sequences, mediating long-range chromatin looping. Causes local loss of histone acetylation and gain of histone methylation in the beta-globin locus, without affecting transcription. When bound to chromatin, it provides an anchor point for nucleosomes positioning (By similarity). Seems to be essential for homologous X-chromosome pairing (By similarity). May participate with Tsix in establishing a regulatable epigenetic switch for X chromosome inactivation. May play a role in preventing the propagation of stable methylation at the escape genes from X-inactivation. Involved in sister chromatid cohesion. Associates with both centromeres and chromosomal arms during metaphase and required for cohesin localization to CTCF sites. Plays a role in the recruitment of CENPE to the pericentromeric/centromeric regions of the chromosome during mitosis. Acts as a transcriptional repressor binding to promoters of vertebrate MYC gene and BAG1 gene. Also binds to the PLK and PIM1 promoters. Acts as a transcriptional activator of APP. Regulates APOA1/C3/A4/A5 gene cluster and controls MHC class II gene expression (By similarity). Plays an essential role in oocyte and preimplantation embryo development by activating or repressing transcription (By similarity). Seems to act as tumor suppressor (By similarity).</text>
</comment>
<comment type="subunit">
    <text evidence="2 3">Interacts with CHD8 (By similarity). Interacts with LLPH (By similarity). Interacts with CENPE (By similarity). Interacts with BRD2; promoting BRD2 recruitment to chromatin (By similarity).</text>
</comment>
<comment type="subcellular location">
    <subcellularLocation>
        <location evidence="3">Nucleus</location>
        <location evidence="3">Nucleoplasm</location>
    </subcellularLocation>
    <subcellularLocation>
        <location evidence="2">Chromosome</location>
    </subcellularLocation>
    <subcellularLocation>
        <location evidence="2">Chromosome</location>
        <location evidence="2">Centromere</location>
    </subcellularLocation>
    <text evidence="2">May translocate to the nucleolus upon cell differentiation. Associates with both centromeres and chromosomal arms during metaphase. Associates with the H19 ICR in mitotic chromosomes. May be preferentially excluded from heterochromatin during interphase.</text>
</comment>
<comment type="PTM">
    <text evidence="3">Sumoylated on Lys-74 and Lys-699; sumoylation of CTCF contributes to the repressive function of CTCF on the MYC P2 promoter.</text>
</comment>
<comment type="similarity">
    <text evidence="6">Belongs to the CTCF zinc-finger protein family.</text>
</comment>
<sequence>MEGEAVEAIVEESETFIKGKERKTYQRRREGGQEEDACHLPQNQTDGGEVVQDVNSSVQMVMMEQLDPTLLQMKTEVMEGTVAPEAEAAVDDTQIITLQVVNMEEQPINIGELQLVQVPVPVTVPVATTSVEELQGAYENEVSKEGLAESEPMICHTLPLPEGFQVVKVGANGEVETLEQGELPPQEDPSWQKDPDYQPPAKKTKKTKKSKLRYTEEGKDVDVSVYDFEEEQQEGLLSEVNAEKVVGNMKPPKPTKIKKKGVKKTFQCELCSYTCPRRSNLDRHMKSHTDERPHKCHLCGRAFRTVTLLRNHLNTHTGTRPHKCPDCDMAFVTSGELVRHRRYKHTHEKPFKCSMCDYASVEVSKLKRHIRSHTGERPFQCSLCSYASRDTYKLKRHMRTHSGEKPYECYICHARFTQSGTMKMHILQKHTENVAKFHCPHCDTVIARKSDLGVHLRKQHSYIEQGKKCRYCDAVFHERYALIQHQKSHKNEKRFKCDQCDYACRQERHMIMHKRTHTGEKPYACSHCDKTFRQKQLLDMHFKRYHDPNFVPAAFVCSKCGKTFTRRNTMARHADNCAGPDGVEGENGGETKKSKRGRKRKMRSKKEDSSDSENAEPDLDDNEEEEEPAVEIEPEPEPQPQPQPQPQPQPVAPAPPPAKKRRGRPPGRTNQPKQNQPTAIIQVEDQNTGAIENIIVEVKKEPDAEPAEGEEEEAQAAPADAPNGDLTPEMILSMMDR</sequence>
<accession>Q9R1D1</accession>
<gene>
    <name type="primary">Ctcf</name>
</gene>
<proteinExistence type="evidence at transcript level"/>
<organism>
    <name type="scientific">Rattus norvegicus</name>
    <name type="common">Rat</name>
    <dbReference type="NCBI Taxonomy" id="10116"/>
    <lineage>
        <taxon>Eukaryota</taxon>
        <taxon>Metazoa</taxon>
        <taxon>Chordata</taxon>
        <taxon>Craniata</taxon>
        <taxon>Vertebrata</taxon>
        <taxon>Euteleostomi</taxon>
        <taxon>Mammalia</taxon>
        <taxon>Eutheria</taxon>
        <taxon>Euarchontoglires</taxon>
        <taxon>Glires</taxon>
        <taxon>Rodentia</taxon>
        <taxon>Myomorpha</taxon>
        <taxon>Muroidea</taxon>
        <taxon>Muridae</taxon>
        <taxon>Murinae</taxon>
        <taxon>Rattus</taxon>
    </lineage>
</organism>
<evidence type="ECO:0000250" key="1"/>
<evidence type="ECO:0000250" key="2">
    <source>
        <dbReference type="UniProtKB" id="P49711"/>
    </source>
</evidence>
<evidence type="ECO:0000250" key="3">
    <source>
        <dbReference type="UniProtKB" id="Q61164"/>
    </source>
</evidence>
<evidence type="ECO:0000255" key="4">
    <source>
        <dbReference type="PROSITE-ProRule" id="PRU00042"/>
    </source>
</evidence>
<evidence type="ECO:0000256" key="5">
    <source>
        <dbReference type="SAM" id="MobiDB-lite"/>
    </source>
</evidence>
<evidence type="ECO:0000305" key="6"/>
<keyword id="KW-0007">Acetylation</keyword>
<keyword id="KW-0010">Activator</keyword>
<keyword id="KW-0137">Centromere</keyword>
<keyword id="KW-0156">Chromatin regulator</keyword>
<keyword id="KW-0158">Chromosome</keyword>
<keyword id="KW-0159">Chromosome partition</keyword>
<keyword id="KW-0238">DNA-binding</keyword>
<keyword id="KW-1017">Isopeptide bond</keyword>
<keyword id="KW-0479">Metal-binding</keyword>
<keyword id="KW-0539">Nucleus</keyword>
<keyword id="KW-0597">Phosphoprotein</keyword>
<keyword id="KW-1185">Reference proteome</keyword>
<keyword id="KW-0677">Repeat</keyword>
<keyword id="KW-0678">Repressor</keyword>
<keyword id="KW-0804">Transcription</keyword>
<keyword id="KW-0805">Transcription regulation</keyword>
<keyword id="KW-0043">Tumor suppressor</keyword>
<keyword id="KW-0832">Ubl conjugation</keyword>
<keyword id="KW-0862">Zinc</keyword>
<keyword id="KW-0863">Zinc-finger</keyword>
<reference key="1">
    <citation type="submission" date="1999-08" db="EMBL/GenBank/DDBJ databases">
        <title>Sequencing of rat CTCF (11-Zinc fingers protein) cDNA.</title>
        <authorList>
            <person name="Jing L."/>
            <person name="Mikheev A.M."/>
            <person name="Lobanenkov V."/>
            <person name="Zarbl H."/>
        </authorList>
    </citation>
    <scope>NUCLEOTIDE SEQUENCE [MRNA]</scope>
    <source>
        <strain>COP</strain>
    </source>
</reference>